<proteinExistence type="inferred from homology"/>
<organism>
    <name type="scientific">Thermosynechococcus vestitus (strain NIES-2133 / IAM M-273 / BP-1)</name>
    <dbReference type="NCBI Taxonomy" id="197221"/>
    <lineage>
        <taxon>Bacteria</taxon>
        <taxon>Bacillati</taxon>
        <taxon>Cyanobacteriota</taxon>
        <taxon>Cyanophyceae</taxon>
        <taxon>Acaryochloridales</taxon>
        <taxon>Thermosynechococcaceae</taxon>
        <taxon>Thermosynechococcus</taxon>
    </lineage>
</organism>
<protein>
    <recommendedName>
        <fullName evidence="1">NAD kinase 1</fullName>
        <ecNumber evidence="1">2.7.1.23</ecNumber>
    </recommendedName>
    <alternativeName>
        <fullName evidence="1">ATP-dependent NAD kinase 1</fullName>
    </alternativeName>
</protein>
<sequence length="306" mass="33683">MQLNQVIVVHKAGDRQSKEWADRASRQLQQRGANVLVGPSGPKDNPYPVFMASVTEPIDLAVVLGGDGTSLAAARHLAAAGVPILAVNVGGHLGFLTEPLELFRDMEAVWDRLERDEYAMQQRMMLQAQVFEGSKAHPEAVGDRYYALNEMCIKPASADRMITAILEMEIDGDVVDQYQGDGLLVATPTGSTCYTVAANGPILHPGMEALVVTPICPLSLSSRPIVLPARSSVSIWPLEDHSLNTKLWMDGVLATSIWPGQRVQVTMADCQARFIILRDHYSFYQTLREKLAWAGARIPYHNNHRN</sequence>
<keyword id="KW-0067">ATP-binding</keyword>
<keyword id="KW-0963">Cytoplasm</keyword>
<keyword id="KW-0418">Kinase</keyword>
<keyword id="KW-0520">NAD</keyword>
<keyword id="KW-0521">NADP</keyword>
<keyword id="KW-0547">Nucleotide-binding</keyword>
<keyword id="KW-1185">Reference proteome</keyword>
<keyword id="KW-0808">Transferase</keyword>
<evidence type="ECO:0000255" key="1">
    <source>
        <dbReference type="HAMAP-Rule" id="MF_00361"/>
    </source>
</evidence>
<comment type="function">
    <text evidence="1">Involved in the regulation of the intracellular balance of NAD and NADP, and is a key enzyme in the biosynthesis of NADP. Catalyzes specifically the phosphorylation on 2'-hydroxyl of the adenosine moiety of NAD to yield NADP.</text>
</comment>
<comment type="catalytic activity">
    <reaction evidence="1">
        <text>NAD(+) + ATP = ADP + NADP(+) + H(+)</text>
        <dbReference type="Rhea" id="RHEA:18629"/>
        <dbReference type="ChEBI" id="CHEBI:15378"/>
        <dbReference type="ChEBI" id="CHEBI:30616"/>
        <dbReference type="ChEBI" id="CHEBI:57540"/>
        <dbReference type="ChEBI" id="CHEBI:58349"/>
        <dbReference type="ChEBI" id="CHEBI:456216"/>
        <dbReference type="EC" id="2.7.1.23"/>
    </reaction>
</comment>
<comment type="cofactor">
    <cofactor evidence="1">
        <name>a divalent metal cation</name>
        <dbReference type="ChEBI" id="CHEBI:60240"/>
    </cofactor>
</comment>
<comment type="subcellular location">
    <subcellularLocation>
        <location evidence="1">Cytoplasm</location>
    </subcellularLocation>
</comment>
<comment type="similarity">
    <text evidence="1">Belongs to the NAD kinase family.</text>
</comment>
<name>NADK1_THEVB</name>
<accession>Q8RR32</accession>
<gene>
    <name evidence="1" type="primary">nadK1</name>
    <name type="ordered locus">tlr0484</name>
</gene>
<dbReference type="EC" id="2.7.1.23" evidence="1"/>
<dbReference type="EMBL" id="AB071375">
    <property type="protein sequence ID" value="BAB85986.1"/>
    <property type="molecule type" value="Genomic_DNA"/>
</dbReference>
<dbReference type="EMBL" id="BA000039">
    <property type="protein sequence ID" value="BAC08036.1"/>
    <property type="molecule type" value="Genomic_DNA"/>
</dbReference>
<dbReference type="RefSeq" id="NP_681274.1">
    <property type="nucleotide sequence ID" value="NC_004113.1"/>
</dbReference>
<dbReference type="RefSeq" id="WP_011056335.1">
    <property type="nucleotide sequence ID" value="NC_004113.1"/>
</dbReference>
<dbReference type="SMR" id="Q8RR32"/>
<dbReference type="STRING" id="197221.gene:10747073"/>
<dbReference type="EnsemblBacteria" id="BAC08036">
    <property type="protein sequence ID" value="BAC08036"/>
    <property type="gene ID" value="BAC08036"/>
</dbReference>
<dbReference type="KEGG" id="tel:tlr0484"/>
<dbReference type="PATRIC" id="fig|197221.4.peg.509"/>
<dbReference type="eggNOG" id="COG0061">
    <property type="taxonomic scope" value="Bacteria"/>
</dbReference>
<dbReference type="Proteomes" id="UP000000440">
    <property type="component" value="Chromosome"/>
</dbReference>
<dbReference type="GO" id="GO:0005737">
    <property type="term" value="C:cytoplasm"/>
    <property type="evidence" value="ECO:0007669"/>
    <property type="project" value="UniProtKB-SubCell"/>
</dbReference>
<dbReference type="GO" id="GO:0005524">
    <property type="term" value="F:ATP binding"/>
    <property type="evidence" value="ECO:0007669"/>
    <property type="project" value="UniProtKB-KW"/>
</dbReference>
<dbReference type="GO" id="GO:0046872">
    <property type="term" value="F:metal ion binding"/>
    <property type="evidence" value="ECO:0007669"/>
    <property type="project" value="UniProtKB-UniRule"/>
</dbReference>
<dbReference type="GO" id="GO:0051287">
    <property type="term" value="F:NAD binding"/>
    <property type="evidence" value="ECO:0007669"/>
    <property type="project" value="UniProtKB-ARBA"/>
</dbReference>
<dbReference type="GO" id="GO:0003951">
    <property type="term" value="F:NAD+ kinase activity"/>
    <property type="evidence" value="ECO:0007669"/>
    <property type="project" value="UniProtKB-UniRule"/>
</dbReference>
<dbReference type="GO" id="GO:0019674">
    <property type="term" value="P:NAD metabolic process"/>
    <property type="evidence" value="ECO:0007669"/>
    <property type="project" value="InterPro"/>
</dbReference>
<dbReference type="GO" id="GO:0006741">
    <property type="term" value="P:NADP biosynthetic process"/>
    <property type="evidence" value="ECO:0007669"/>
    <property type="project" value="UniProtKB-UniRule"/>
</dbReference>
<dbReference type="Gene3D" id="3.40.50.10330">
    <property type="entry name" value="Probable inorganic polyphosphate/atp-NAD kinase, domain 1"/>
    <property type="match status" value="1"/>
</dbReference>
<dbReference type="Gene3D" id="2.60.200.30">
    <property type="entry name" value="Probable inorganic polyphosphate/atp-NAD kinase, domain 2"/>
    <property type="match status" value="1"/>
</dbReference>
<dbReference type="HAMAP" id="MF_00361">
    <property type="entry name" value="NAD_kinase"/>
    <property type="match status" value="1"/>
</dbReference>
<dbReference type="InterPro" id="IPR017438">
    <property type="entry name" value="ATP-NAD_kinase_N"/>
</dbReference>
<dbReference type="InterPro" id="IPR017437">
    <property type="entry name" value="ATP-NAD_kinase_PpnK-typ_C"/>
</dbReference>
<dbReference type="InterPro" id="IPR016064">
    <property type="entry name" value="NAD/diacylglycerol_kinase_sf"/>
</dbReference>
<dbReference type="InterPro" id="IPR002504">
    <property type="entry name" value="NADK"/>
</dbReference>
<dbReference type="NCBIfam" id="NF002731">
    <property type="entry name" value="PRK02645.1"/>
    <property type="match status" value="1"/>
</dbReference>
<dbReference type="PANTHER" id="PTHR20275">
    <property type="entry name" value="NAD KINASE"/>
    <property type="match status" value="1"/>
</dbReference>
<dbReference type="PANTHER" id="PTHR20275:SF0">
    <property type="entry name" value="NAD KINASE"/>
    <property type="match status" value="1"/>
</dbReference>
<dbReference type="Pfam" id="PF01513">
    <property type="entry name" value="NAD_kinase"/>
    <property type="match status" value="1"/>
</dbReference>
<dbReference type="Pfam" id="PF20143">
    <property type="entry name" value="NAD_kinase_C"/>
    <property type="match status" value="1"/>
</dbReference>
<dbReference type="SUPFAM" id="SSF111331">
    <property type="entry name" value="NAD kinase/diacylglycerol kinase-like"/>
    <property type="match status" value="1"/>
</dbReference>
<feature type="chain" id="PRO_0000120677" description="NAD kinase 1">
    <location>
        <begin position="1"/>
        <end position="306"/>
    </location>
</feature>
<feature type="active site" description="Proton acceptor" evidence="1">
    <location>
        <position position="67"/>
    </location>
</feature>
<feature type="binding site" evidence="1">
    <location>
        <begin position="67"/>
        <end position="68"/>
    </location>
    <ligand>
        <name>NAD(+)</name>
        <dbReference type="ChEBI" id="CHEBI:57540"/>
    </ligand>
</feature>
<feature type="binding site" evidence="1">
    <location>
        <begin position="149"/>
        <end position="150"/>
    </location>
    <ligand>
        <name>NAD(+)</name>
        <dbReference type="ChEBI" id="CHEBI:57540"/>
    </ligand>
</feature>
<feature type="binding site" evidence="1">
    <location>
        <position position="181"/>
    </location>
    <ligand>
        <name>NAD(+)</name>
        <dbReference type="ChEBI" id="CHEBI:57540"/>
    </ligand>
</feature>
<reference key="1">
    <citation type="submission" date="2001-09" db="EMBL/GenBank/DDBJ databases">
        <title>Circadian clock gene cluster kaiABC in Synechococcus elongatus.</title>
        <authorList>
            <person name="Uzumaki T."/>
            <person name="Hayashi F."/>
            <person name="Onai K."/>
            <person name="Ishiura M."/>
        </authorList>
    </citation>
    <scope>NUCLEOTIDE SEQUENCE [GENOMIC DNA]</scope>
</reference>
<reference key="2">
    <citation type="journal article" date="2002" name="DNA Res.">
        <title>Complete genome structure of the thermophilic cyanobacterium Thermosynechococcus elongatus BP-1.</title>
        <authorList>
            <person name="Nakamura Y."/>
            <person name="Kaneko T."/>
            <person name="Sato S."/>
            <person name="Ikeuchi M."/>
            <person name="Katoh H."/>
            <person name="Sasamoto S."/>
            <person name="Watanabe A."/>
            <person name="Iriguchi M."/>
            <person name="Kawashima K."/>
            <person name="Kimura T."/>
            <person name="Kishida Y."/>
            <person name="Kiyokawa C."/>
            <person name="Kohara M."/>
            <person name="Matsumoto M."/>
            <person name="Matsuno A."/>
            <person name="Nakazaki N."/>
            <person name="Shimpo S."/>
            <person name="Sugimoto M."/>
            <person name="Takeuchi C."/>
            <person name="Yamada M."/>
            <person name="Tabata S."/>
        </authorList>
    </citation>
    <scope>NUCLEOTIDE SEQUENCE [LARGE SCALE GENOMIC DNA]</scope>
    <source>
        <strain>NIES-2133 / IAM M-273 / BP-1</strain>
    </source>
</reference>